<protein>
    <recommendedName>
        <fullName>Protein C4</fullName>
    </recommendedName>
</protein>
<organismHost>
    <name type="scientific">Homo sapiens</name>
    <name type="common">Human</name>
    <dbReference type="NCBI Taxonomy" id="9606"/>
</organismHost>
<organism>
    <name type="scientific">Variola virus (isolate Human/India/Ind3/1967)</name>
    <name type="common">VARV</name>
    <name type="synonym">Smallpox virus</name>
    <dbReference type="NCBI Taxonomy" id="587200"/>
    <lineage>
        <taxon>Viruses</taxon>
        <taxon>Varidnaviria</taxon>
        <taxon>Bamfordvirae</taxon>
        <taxon>Nucleocytoviricota</taxon>
        <taxon>Pokkesviricetes</taxon>
        <taxon>Chitovirales</taxon>
        <taxon>Poxviridae</taxon>
        <taxon>Chordopoxvirinae</taxon>
        <taxon>Orthopoxvirus</taxon>
        <taxon>Variola virus</taxon>
    </lineage>
</organism>
<proteinExistence type="inferred from homology"/>
<gene>
    <name type="primary">OPG031</name>
    <name type="synonym">C4L</name>
    <name type="synonym">D11L</name>
    <name type="synonym">D14L</name>
    <name type="ORF">VACWR024</name>
</gene>
<dbReference type="EMBL" id="X69198">
    <property type="protein sequence ID" value="CAA48952.1"/>
    <property type="molecule type" value="Genomic_DNA"/>
</dbReference>
<dbReference type="EMBL" id="U18337">
    <property type="protein sequence ID" value="AAA69316.1"/>
    <property type="molecule type" value="Genomic_DNA"/>
</dbReference>
<dbReference type="EMBL" id="U18340">
    <property type="protein sequence ID" value="AAA69422.1"/>
    <property type="molecule type" value="Genomic_DNA"/>
</dbReference>
<dbReference type="PIR" id="B36838">
    <property type="entry name" value="B36838"/>
</dbReference>
<dbReference type="RefSeq" id="NP_042055.1">
    <property type="nucleotide sequence ID" value="NC_001611.1"/>
</dbReference>
<dbReference type="SMR" id="P34012"/>
<dbReference type="GeneID" id="1486391"/>
<dbReference type="KEGG" id="vg:1486391"/>
<dbReference type="Proteomes" id="UP000002060">
    <property type="component" value="Segment"/>
</dbReference>
<dbReference type="GO" id="GO:0030430">
    <property type="term" value="C:host cell cytoplasm"/>
    <property type="evidence" value="ECO:0007669"/>
    <property type="project" value="UniProtKB-SubCell"/>
</dbReference>
<dbReference type="GO" id="GO:0042025">
    <property type="term" value="C:host cell nucleus"/>
    <property type="evidence" value="ECO:0007669"/>
    <property type="project" value="UniProtKB-SubCell"/>
</dbReference>
<dbReference type="InterPro" id="IPR005004">
    <property type="entry name" value="Poxvirus_C4/C10"/>
</dbReference>
<dbReference type="Pfam" id="PF03336">
    <property type="entry name" value="Pox_C4_C10"/>
    <property type="match status" value="1"/>
</dbReference>
<dbReference type="PIRSF" id="PIRSF003698">
    <property type="entry name" value="VAC_C10L"/>
    <property type="match status" value="1"/>
</dbReference>
<comment type="function">
    <text evidence="1">Plays a role in the inhibition of host NF-kappa-B activation. Mechanistically, blocks the subunit p65/RELA translocation into the host nucleus.</text>
</comment>
<comment type="subcellular location">
    <subcellularLocation>
        <location evidence="1">Host cytoplasm</location>
    </subcellularLocation>
    <subcellularLocation>
        <location evidence="1">Host nucleus</location>
    </subcellularLocation>
</comment>
<comment type="induction">
    <text evidence="1">Expressed in the early phase of the viral replicative cycle.</text>
</comment>
<comment type="similarity">
    <text evidence="2">Belongs to the poxviridae OPG031 protein family.</text>
</comment>
<sequence length="316" mass="37218">MDTIKIFNHGEFDTIRNKLVNLLKVVKWNTINSNVTVSSTDTIDISNCIREILYKQFKNVRNIEVSSNISFIKYNRFNDTTLTDDNVGYYLVIYLNRMKSVKTLIYPTPETVITSSEDIMFSKSLNFRFENVKRDYKLVMCSISLTYKPSICRIQYDNNKYIDISDSQEGNNLCYCVITMDPHHLIDLETICVLVNKSGKCLLVNEFYTRFRKNHIYDSFADLCMDHIFELPDTEELFTLRNDDGRNIAWDNDKLESGNNTWIPKTDDEYKFLSKLMNIAKFNNTKFDYYMLVGDTDPCTVFTFKVTKYYINLNYE</sequence>
<evidence type="ECO:0000250" key="1">
    <source>
        <dbReference type="UniProtKB" id="P17370"/>
    </source>
</evidence>
<evidence type="ECO:0000305" key="2"/>
<feature type="chain" id="PRO_0000099379" description="Protein C4">
    <location>
        <begin position="1"/>
        <end position="316"/>
    </location>
</feature>
<name>PG031_VAR67</name>
<keyword id="KW-0244">Early protein</keyword>
<keyword id="KW-1035">Host cytoplasm</keyword>
<keyword id="KW-1048">Host nucleus</keyword>
<keyword id="KW-1185">Reference proteome</keyword>
<reference key="1">
    <citation type="journal article" date="1993" name="FEBS Lett.">
        <title>Genes of variola and vaccinia viruses necessary to overcome the host protective mechanisms.</title>
        <authorList>
            <person name="Shchelkunov S.N."/>
            <person name="Blinov V.M."/>
            <person name="Sandakhchiev L.S."/>
        </authorList>
    </citation>
    <scope>NUCLEOTIDE SEQUENCE [GENOMIC DNA]</scope>
    <source>
        <strain>India-1967 / Isolate Ind3</strain>
    </source>
</reference>
<reference key="2">
    <citation type="journal article" date="1994" name="Virus Res.">
        <title>Analysis of the nucleotide sequence of 53 kbp from the right terminus of the genome of variola major virus strain India-1967.</title>
        <authorList>
            <person name="Shchelkunov S.N."/>
            <person name="Blinov V.M."/>
            <person name="Resenchuk S.M."/>
            <person name="Totmenin A.V."/>
            <person name="Olenina L.V."/>
            <person name="Chirikova G.B."/>
            <person name="Sandakhchiev L.S."/>
        </authorList>
    </citation>
    <scope>NUCLEOTIDE SEQUENCE [GENOMIC DNA]</scope>
    <source>
        <strain>India-1967 / Isolate Ind3</strain>
    </source>
</reference>
<reference key="3">
    <citation type="submission" date="1995-07" db="EMBL/GenBank/DDBJ databases">
        <authorList>
            <person name="Massung R.F."/>
            <person name="Loparev V.N."/>
            <person name="Knight J.C."/>
            <person name="Chizhikov V.E."/>
            <person name="Parsons J.M."/>
            <person name="Totmenin A.V."/>
            <person name="Shchelkunov S.N."/>
            <person name="Esposito J.J."/>
        </authorList>
    </citation>
    <scope>NUCLEOTIDE SEQUENCE [GENOMIC DNA]</scope>
    <source>
        <strain>Congo-1965</strain>
        <strain>Somalia-1977</strain>
    </source>
</reference>
<accession>P34012</accession>